<organism>
    <name type="scientific">Listeria innocua serovar 6a (strain ATCC BAA-680 / CLIP 11262)</name>
    <dbReference type="NCBI Taxonomy" id="272626"/>
    <lineage>
        <taxon>Bacteria</taxon>
        <taxon>Bacillati</taxon>
        <taxon>Bacillota</taxon>
        <taxon>Bacilli</taxon>
        <taxon>Bacillales</taxon>
        <taxon>Listeriaceae</taxon>
        <taxon>Listeria</taxon>
    </lineage>
</organism>
<evidence type="ECO:0000255" key="1">
    <source>
        <dbReference type="HAMAP-Rule" id="MF_01393"/>
    </source>
</evidence>
<proteinExistence type="inferred from homology"/>
<feature type="chain" id="PRO_1000145285" description="ATP synthase subunit a">
    <location>
        <begin position="1"/>
        <end position="238"/>
    </location>
</feature>
<feature type="transmembrane region" description="Helical" evidence="1">
    <location>
        <begin position="17"/>
        <end position="37"/>
    </location>
</feature>
<feature type="transmembrane region" description="Helical" evidence="1">
    <location>
        <begin position="80"/>
        <end position="100"/>
    </location>
</feature>
<feature type="transmembrane region" description="Helical" evidence="1">
    <location>
        <begin position="112"/>
        <end position="132"/>
    </location>
</feature>
<feature type="transmembrane region" description="Helical" evidence="1">
    <location>
        <begin position="194"/>
        <end position="214"/>
    </location>
</feature>
<comment type="function">
    <text evidence="1">Key component of the proton channel; it plays a direct role in the translocation of protons across the membrane.</text>
</comment>
<comment type="subunit">
    <text evidence="1">F-type ATPases have 2 components, CF(1) - the catalytic core - and CF(0) - the membrane proton channel. CF(1) has five subunits: alpha(3), beta(3), gamma(1), delta(1), epsilon(1). CF(0) has three main subunits: a(1), b(2) and c(9-12). The alpha and beta chains form an alternating ring which encloses part of the gamma chain. CF(1) is attached to CF(0) by a central stalk formed by the gamma and epsilon chains, while a peripheral stalk is formed by the delta and b chains.</text>
</comment>
<comment type="subcellular location">
    <subcellularLocation>
        <location evidence="1">Cell membrane</location>
        <topology evidence="1">Multi-pass membrane protein</topology>
    </subcellularLocation>
</comment>
<comment type="similarity">
    <text evidence="1">Belongs to the ATPase A chain family.</text>
</comment>
<dbReference type="EMBL" id="AL596173">
    <property type="protein sequence ID" value="CAC97905.1"/>
    <property type="molecule type" value="Genomic_DNA"/>
</dbReference>
<dbReference type="PIR" id="AI1766">
    <property type="entry name" value="AI1766"/>
</dbReference>
<dbReference type="RefSeq" id="WP_003723468.1">
    <property type="nucleotide sequence ID" value="NC_003212.1"/>
</dbReference>
<dbReference type="SMR" id="Q927V8"/>
<dbReference type="STRING" id="272626.gene:17567059"/>
<dbReference type="GeneID" id="93235942"/>
<dbReference type="KEGG" id="lin:atpB"/>
<dbReference type="eggNOG" id="COG0356">
    <property type="taxonomic scope" value="Bacteria"/>
</dbReference>
<dbReference type="HOGENOM" id="CLU_041018_2_3_9"/>
<dbReference type="OrthoDB" id="9789241at2"/>
<dbReference type="Proteomes" id="UP000002513">
    <property type="component" value="Chromosome"/>
</dbReference>
<dbReference type="GO" id="GO:0005886">
    <property type="term" value="C:plasma membrane"/>
    <property type="evidence" value="ECO:0007669"/>
    <property type="project" value="UniProtKB-SubCell"/>
</dbReference>
<dbReference type="GO" id="GO:0045259">
    <property type="term" value="C:proton-transporting ATP synthase complex"/>
    <property type="evidence" value="ECO:0007669"/>
    <property type="project" value="UniProtKB-KW"/>
</dbReference>
<dbReference type="GO" id="GO:0046933">
    <property type="term" value="F:proton-transporting ATP synthase activity, rotational mechanism"/>
    <property type="evidence" value="ECO:0007669"/>
    <property type="project" value="UniProtKB-UniRule"/>
</dbReference>
<dbReference type="GO" id="GO:0042777">
    <property type="term" value="P:proton motive force-driven plasma membrane ATP synthesis"/>
    <property type="evidence" value="ECO:0007669"/>
    <property type="project" value="TreeGrafter"/>
</dbReference>
<dbReference type="CDD" id="cd00310">
    <property type="entry name" value="ATP-synt_Fo_a_6"/>
    <property type="match status" value="1"/>
</dbReference>
<dbReference type="FunFam" id="1.20.120.220:FF:000005">
    <property type="entry name" value="ATP synthase subunit a"/>
    <property type="match status" value="1"/>
</dbReference>
<dbReference type="Gene3D" id="1.20.120.220">
    <property type="entry name" value="ATP synthase, F0 complex, subunit A"/>
    <property type="match status" value="1"/>
</dbReference>
<dbReference type="HAMAP" id="MF_01393">
    <property type="entry name" value="ATP_synth_a_bact"/>
    <property type="match status" value="1"/>
</dbReference>
<dbReference type="InterPro" id="IPR045082">
    <property type="entry name" value="ATP_syn_F0_a_bact/chloroplast"/>
</dbReference>
<dbReference type="InterPro" id="IPR000568">
    <property type="entry name" value="ATP_synth_F0_asu"/>
</dbReference>
<dbReference type="InterPro" id="IPR023011">
    <property type="entry name" value="ATP_synth_F0_asu_AS"/>
</dbReference>
<dbReference type="InterPro" id="IPR035908">
    <property type="entry name" value="F0_ATP_A_sf"/>
</dbReference>
<dbReference type="NCBIfam" id="TIGR01131">
    <property type="entry name" value="ATP_synt_6_or_A"/>
    <property type="match status" value="1"/>
</dbReference>
<dbReference type="NCBIfam" id="NF004479">
    <property type="entry name" value="PRK05815.1-4"/>
    <property type="match status" value="1"/>
</dbReference>
<dbReference type="PANTHER" id="PTHR42823">
    <property type="entry name" value="ATP SYNTHASE SUBUNIT A, CHLOROPLASTIC"/>
    <property type="match status" value="1"/>
</dbReference>
<dbReference type="PANTHER" id="PTHR42823:SF3">
    <property type="entry name" value="ATP SYNTHASE SUBUNIT A, CHLOROPLASTIC"/>
    <property type="match status" value="1"/>
</dbReference>
<dbReference type="Pfam" id="PF00119">
    <property type="entry name" value="ATP-synt_A"/>
    <property type="match status" value="1"/>
</dbReference>
<dbReference type="PRINTS" id="PR00123">
    <property type="entry name" value="ATPASEA"/>
</dbReference>
<dbReference type="SUPFAM" id="SSF81336">
    <property type="entry name" value="F1F0 ATP synthase subunit A"/>
    <property type="match status" value="1"/>
</dbReference>
<dbReference type="PROSITE" id="PS00449">
    <property type="entry name" value="ATPASE_A"/>
    <property type="match status" value="1"/>
</dbReference>
<gene>
    <name evidence="1" type="primary">atpB</name>
    <name type="ordered locus">lin2679</name>
</gene>
<reference key="1">
    <citation type="journal article" date="2001" name="Science">
        <title>Comparative genomics of Listeria species.</title>
        <authorList>
            <person name="Glaser P."/>
            <person name="Frangeul L."/>
            <person name="Buchrieser C."/>
            <person name="Rusniok C."/>
            <person name="Amend A."/>
            <person name="Baquero F."/>
            <person name="Berche P."/>
            <person name="Bloecker H."/>
            <person name="Brandt P."/>
            <person name="Chakraborty T."/>
            <person name="Charbit A."/>
            <person name="Chetouani F."/>
            <person name="Couve E."/>
            <person name="de Daruvar A."/>
            <person name="Dehoux P."/>
            <person name="Domann E."/>
            <person name="Dominguez-Bernal G."/>
            <person name="Duchaud E."/>
            <person name="Durant L."/>
            <person name="Dussurget O."/>
            <person name="Entian K.-D."/>
            <person name="Fsihi H."/>
            <person name="Garcia-del Portillo F."/>
            <person name="Garrido P."/>
            <person name="Gautier L."/>
            <person name="Goebel W."/>
            <person name="Gomez-Lopez N."/>
            <person name="Hain T."/>
            <person name="Hauf J."/>
            <person name="Jackson D."/>
            <person name="Jones L.-M."/>
            <person name="Kaerst U."/>
            <person name="Kreft J."/>
            <person name="Kuhn M."/>
            <person name="Kunst F."/>
            <person name="Kurapkat G."/>
            <person name="Madueno E."/>
            <person name="Maitournam A."/>
            <person name="Mata Vicente J."/>
            <person name="Ng E."/>
            <person name="Nedjari H."/>
            <person name="Nordsiek G."/>
            <person name="Novella S."/>
            <person name="de Pablos B."/>
            <person name="Perez-Diaz J.-C."/>
            <person name="Purcell R."/>
            <person name="Remmel B."/>
            <person name="Rose M."/>
            <person name="Schlueter T."/>
            <person name="Simoes N."/>
            <person name="Tierrez A."/>
            <person name="Vazquez-Boland J.-A."/>
            <person name="Voss H."/>
            <person name="Wehland J."/>
            <person name="Cossart P."/>
        </authorList>
    </citation>
    <scope>NUCLEOTIDE SEQUENCE [LARGE SCALE GENOMIC DNA]</scope>
    <source>
        <strain>ATCC BAA-680 / CLIP 11262</strain>
    </source>
</reference>
<sequence length="238" mass="27081">MEEEFPTISLLGIDFNLSNILMITVTCVIVLLIAIICTRNLQRRPTGKQNFIEWVMDFVRGIINSNMDWKTGGRFHVLGITLLMFIFVANMLGLPFQIAINDEVWWRSPTADPIVTLTLAIMVLGLTHYYGIKMRGFKHYFVGTYFSPMKFLFPLKLVEEFANTLTLGLRLYGNIFAGEVLLTIIATQLAHMNIFVGVLAIIPALLWQGFSIFIGAIQAYIFTMLTMVYMSHKVSDEH</sequence>
<protein>
    <recommendedName>
        <fullName evidence="1">ATP synthase subunit a</fullName>
    </recommendedName>
    <alternativeName>
        <fullName evidence="1">ATP synthase F0 sector subunit a</fullName>
    </alternativeName>
    <alternativeName>
        <fullName evidence="1">F-ATPase subunit 6</fullName>
    </alternativeName>
</protein>
<keyword id="KW-0066">ATP synthesis</keyword>
<keyword id="KW-1003">Cell membrane</keyword>
<keyword id="KW-0138">CF(0)</keyword>
<keyword id="KW-0375">Hydrogen ion transport</keyword>
<keyword id="KW-0406">Ion transport</keyword>
<keyword id="KW-0472">Membrane</keyword>
<keyword id="KW-0812">Transmembrane</keyword>
<keyword id="KW-1133">Transmembrane helix</keyword>
<keyword id="KW-0813">Transport</keyword>
<name>ATP6_LISIN</name>
<accession>Q927V8</accession>